<keyword id="KW-0963">Cytoplasm</keyword>
<keyword id="KW-0489">Methyltransferase</keyword>
<keyword id="KW-0694">RNA-binding</keyword>
<keyword id="KW-0698">rRNA processing</keyword>
<keyword id="KW-0949">S-adenosyl-L-methionine</keyword>
<keyword id="KW-0808">Transferase</keyword>
<evidence type="ECO:0000255" key="1">
    <source>
        <dbReference type="HAMAP-Rule" id="MF_01857"/>
    </source>
</evidence>
<feature type="chain" id="PRO_0000366226" description="Ribosomal RNA large subunit methyltransferase I">
    <location>
        <begin position="1"/>
        <end position="396"/>
    </location>
</feature>
<feature type="domain" description="PUA" evidence="1">
    <location>
        <begin position="2"/>
        <end position="81"/>
    </location>
</feature>
<accession>Q1RDP5</accession>
<reference key="1">
    <citation type="journal article" date="2006" name="Proc. Natl. Acad. Sci. U.S.A.">
        <title>Identification of genes subject to positive selection in uropathogenic strains of Escherichia coli: a comparative genomics approach.</title>
        <authorList>
            <person name="Chen S.L."/>
            <person name="Hung C.-S."/>
            <person name="Xu J."/>
            <person name="Reigstad C.S."/>
            <person name="Magrini V."/>
            <person name="Sabo A."/>
            <person name="Blasiar D."/>
            <person name="Bieri T."/>
            <person name="Meyer R.R."/>
            <person name="Ozersky P."/>
            <person name="Armstrong J.R."/>
            <person name="Fulton R.S."/>
            <person name="Latreille J.P."/>
            <person name="Spieth J."/>
            <person name="Hooton T.M."/>
            <person name="Mardis E.R."/>
            <person name="Hultgren S.J."/>
            <person name="Gordon J.I."/>
        </authorList>
    </citation>
    <scope>NUCLEOTIDE SEQUENCE [LARGE SCALE GENOMIC DNA]</scope>
    <source>
        <strain>UTI89 / UPEC</strain>
    </source>
</reference>
<organism>
    <name type="scientific">Escherichia coli (strain UTI89 / UPEC)</name>
    <dbReference type="NCBI Taxonomy" id="364106"/>
    <lineage>
        <taxon>Bacteria</taxon>
        <taxon>Pseudomonadati</taxon>
        <taxon>Pseudomonadota</taxon>
        <taxon>Gammaproteobacteria</taxon>
        <taxon>Enterobacterales</taxon>
        <taxon>Enterobacteriaceae</taxon>
        <taxon>Escherichia</taxon>
    </lineage>
</organism>
<proteinExistence type="inferred from homology"/>
<gene>
    <name evidence="1" type="primary">rlmI</name>
    <name type="ordered locus">UTI89_C1034</name>
</gene>
<dbReference type="EC" id="2.1.1.191" evidence="1"/>
<dbReference type="EMBL" id="CP000243">
    <property type="protein sequence ID" value="ABE06519.1"/>
    <property type="molecule type" value="Genomic_DNA"/>
</dbReference>
<dbReference type="RefSeq" id="WP_000116272.1">
    <property type="nucleotide sequence ID" value="NZ_CP064825.1"/>
</dbReference>
<dbReference type="SMR" id="Q1RDP5"/>
<dbReference type="KEGG" id="eci:UTI89_C1034"/>
<dbReference type="HOGENOM" id="CLU_014042_0_0_6"/>
<dbReference type="Proteomes" id="UP000001952">
    <property type="component" value="Chromosome"/>
</dbReference>
<dbReference type="GO" id="GO:0005737">
    <property type="term" value="C:cytoplasm"/>
    <property type="evidence" value="ECO:0007669"/>
    <property type="project" value="UniProtKB-SubCell"/>
</dbReference>
<dbReference type="GO" id="GO:0003723">
    <property type="term" value="F:RNA binding"/>
    <property type="evidence" value="ECO:0007669"/>
    <property type="project" value="UniProtKB-KW"/>
</dbReference>
<dbReference type="GO" id="GO:0016434">
    <property type="term" value="F:rRNA (cytosine) methyltransferase activity"/>
    <property type="evidence" value="ECO:0007669"/>
    <property type="project" value="UniProtKB-UniRule"/>
</dbReference>
<dbReference type="CDD" id="cd02440">
    <property type="entry name" value="AdoMet_MTases"/>
    <property type="match status" value="1"/>
</dbReference>
<dbReference type="CDD" id="cd21153">
    <property type="entry name" value="PUA_RlmI"/>
    <property type="match status" value="1"/>
</dbReference>
<dbReference type="CDD" id="cd11572">
    <property type="entry name" value="RlmI_M_like"/>
    <property type="match status" value="1"/>
</dbReference>
<dbReference type="FunFam" id="2.30.130.10:FF:000005">
    <property type="entry name" value="Ribosomal RNA large subunit methyltransferase I"/>
    <property type="match status" value="1"/>
</dbReference>
<dbReference type="FunFam" id="3.30.750.80:FF:000002">
    <property type="entry name" value="Ribosomal RNA large subunit methyltransferase I"/>
    <property type="match status" value="1"/>
</dbReference>
<dbReference type="FunFam" id="3.40.50.150:FF:000044">
    <property type="entry name" value="Ribosomal RNA large subunit methyltransferase I"/>
    <property type="match status" value="1"/>
</dbReference>
<dbReference type="Gene3D" id="2.30.130.10">
    <property type="entry name" value="PUA domain"/>
    <property type="match status" value="1"/>
</dbReference>
<dbReference type="Gene3D" id="3.30.750.80">
    <property type="entry name" value="RNA methyltransferase domain (HRMD) like"/>
    <property type="match status" value="1"/>
</dbReference>
<dbReference type="Gene3D" id="3.40.50.150">
    <property type="entry name" value="Vaccinia Virus protein VP39"/>
    <property type="match status" value="1"/>
</dbReference>
<dbReference type="HAMAP" id="MF_01857">
    <property type="entry name" value="23SrRNA_methyltr_I"/>
    <property type="match status" value="1"/>
</dbReference>
<dbReference type="InterPro" id="IPR002478">
    <property type="entry name" value="PUA"/>
</dbReference>
<dbReference type="InterPro" id="IPR015947">
    <property type="entry name" value="PUA-like_sf"/>
</dbReference>
<dbReference type="InterPro" id="IPR036974">
    <property type="entry name" value="PUA_sf"/>
</dbReference>
<dbReference type="InterPro" id="IPR023542">
    <property type="entry name" value="RLMI"/>
</dbReference>
<dbReference type="InterPro" id="IPR041532">
    <property type="entry name" value="RlmI-like_PUA"/>
</dbReference>
<dbReference type="InterPro" id="IPR019614">
    <property type="entry name" value="SAM-dep_methyl-trfase"/>
</dbReference>
<dbReference type="InterPro" id="IPR029063">
    <property type="entry name" value="SAM-dependent_MTases_sf"/>
</dbReference>
<dbReference type="NCBIfam" id="NF011707">
    <property type="entry name" value="PRK15128.1"/>
    <property type="match status" value="1"/>
</dbReference>
<dbReference type="PANTHER" id="PTHR42873">
    <property type="entry name" value="RIBOSOMAL RNA LARGE SUBUNIT METHYLTRANSFERASE"/>
    <property type="match status" value="1"/>
</dbReference>
<dbReference type="PANTHER" id="PTHR42873:SF1">
    <property type="entry name" value="S-ADENOSYLMETHIONINE-DEPENDENT METHYLTRANSFERASE DOMAIN-CONTAINING PROTEIN"/>
    <property type="match status" value="1"/>
</dbReference>
<dbReference type="Pfam" id="PF10672">
    <property type="entry name" value="Methyltrans_SAM"/>
    <property type="match status" value="1"/>
</dbReference>
<dbReference type="Pfam" id="PF17785">
    <property type="entry name" value="PUA_3"/>
    <property type="match status" value="1"/>
</dbReference>
<dbReference type="SMART" id="SM00359">
    <property type="entry name" value="PUA"/>
    <property type="match status" value="1"/>
</dbReference>
<dbReference type="SUPFAM" id="SSF88697">
    <property type="entry name" value="PUA domain-like"/>
    <property type="match status" value="1"/>
</dbReference>
<dbReference type="SUPFAM" id="SSF53335">
    <property type="entry name" value="S-adenosyl-L-methionine-dependent methyltransferases"/>
    <property type="match status" value="1"/>
</dbReference>
<dbReference type="PROSITE" id="PS50890">
    <property type="entry name" value="PUA"/>
    <property type="match status" value="1"/>
</dbReference>
<comment type="function">
    <text evidence="1">Specifically methylates the cytosine at position 1962 (m5C1962) of 23S rRNA.</text>
</comment>
<comment type="catalytic activity">
    <reaction evidence="1">
        <text>cytidine(1962) in 23S rRNA + S-adenosyl-L-methionine = 5-methylcytidine(1962) in 23S rRNA + S-adenosyl-L-homocysteine + H(+)</text>
        <dbReference type="Rhea" id="RHEA:42912"/>
        <dbReference type="Rhea" id="RHEA-COMP:10382"/>
        <dbReference type="Rhea" id="RHEA-COMP:10386"/>
        <dbReference type="ChEBI" id="CHEBI:15378"/>
        <dbReference type="ChEBI" id="CHEBI:57856"/>
        <dbReference type="ChEBI" id="CHEBI:59789"/>
        <dbReference type="ChEBI" id="CHEBI:74483"/>
        <dbReference type="ChEBI" id="CHEBI:82748"/>
        <dbReference type="EC" id="2.1.1.191"/>
    </reaction>
</comment>
<comment type="subcellular location">
    <subcellularLocation>
        <location evidence="1">Cytoplasm</location>
    </subcellularLocation>
</comment>
<comment type="similarity">
    <text evidence="1">Belongs to the methyltransferase superfamily. RlmI family.</text>
</comment>
<sequence>MSVRLVLAKGREKSLLRRHPWVFSGAVARMEGKANLGETIDIVDHQGKWLARGAYSPASQIRARVWTFDPSESIDIAFFTRRLQQAQKWRDWLAQKDGLDSYRLIAGESDGLPGITIDRFGNFLVLQLLSAGAEYQRAALISALQTLYPECAIYDRSDVAVRKKEGMELTQGPITGELPPALLPIEEHGMKLLVDIQHGHKTGYYLDQRDSRLATRRYVENKRVLNCFSYTGGFAVSALMGGCSQVVSVDTSHEALDIARQNVELNKLDLSKAEFVRDDVFKLLRTYRDRGEKFDVIVMDPPKFVENKSQLMGACRGYKDINMLAIQLLNEGGILLTFSCSGLMTSDLFQKIIADAAIDAGRDVQFIEQFRQAADHPVIATYPEGLYLKGFACRVM</sequence>
<protein>
    <recommendedName>
        <fullName evidence="1">Ribosomal RNA large subunit methyltransferase I</fullName>
        <ecNumber evidence="1">2.1.1.191</ecNumber>
    </recommendedName>
    <alternativeName>
        <fullName evidence="1">23S rRNA m5C1962 methyltransferase</fullName>
    </alternativeName>
    <alternativeName>
        <fullName evidence="1">rRNA (cytosine-C(5)-)-methyltransferase RlmI</fullName>
    </alternativeName>
</protein>
<name>RLMI_ECOUT</name>